<organism>
    <name type="scientific">Burkholderia cenocepacia (strain H111)</name>
    <dbReference type="NCBI Taxonomy" id="1055524"/>
    <lineage>
        <taxon>Bacteria</taxon>
        <taxon>Pseudomonadati</taxon>
        <taxon>Pseudomonadota</taxon>
        <taxon>Betaproteobacteria</taxon>
        <taxon>Burkholderiales</taxon>
        <taxon>Burkholderiaceae</taxon>
        <taxon>Burkholderia</taxon>
        <taxon>Burkholderia cepacia complex</taxon>
    </lineage>
</organism>
<protein>
    <recommendedName>
        <fullName evidence="5">Double-stranded DNA deaminase toxin A</fullName>
        <shortName evidence="5">DddA</shortName>
        <ecNumber evidence="3">3.5.4.-</ecNumber>
    </recommendedName>
    <alternativeName>
        <fullName evidence="5">Cytidine deaminase</fullName>
        <shortName evidence="6">CD</shortName>
    </alternativeName>
</protein>
<accession>P0DUH5</accession>
<evidence type="ECO:0000255" key="1"/>
<evidence type="ECO:0000256" key="2">
    <source>
        <dbReference type="SAM" id="MobiDB-lite"/>
    </source>
</evidence>
<evidence type="ECO:0000269" key="3">
    <source>
    </source>
</evidence>
<evidence type="ECO:0000269" key="4">
    <source>
    </source>
</evidence>
<evidence type="ECO:0000303" key="5">
    <source>
    </source>
</evidence>
<evidence type="ECO:0000303" key="6">
    <source>
    </source>
</evidence>
<evidence type="ECO:0000305" key="7"/>
<evidence type="ECO:0007744" key="8">
    <source>
        <dbReference type="PDB" id="6U08"/>
    </source>
</evidence>
<evidence type="ECO:0007829" key="9">
    <source>
        <dbReference type="PDB" id="8E5D"/>
    </source>
</evidence>
<evidence type="ECO:0007829" key="10">
    <source>
        <dbReference type="PDB" id="8E5E"/>
    </source>
</evidence>
<dbReference type="EC" id="3.5.4.-" evidence="3"/>
<dbReference type="EMBL" id="HG938372">
    <property type="protein sequence ID" value="CDN65395.1"/>
    <property type="status" value="ALT_INIT"/>
    <property type="molecule type" value="Genomic_DNA"/>
</dbReference>
<dbReference type="RefSeq" id="WP_006498588.1">
    <property type="nucleotide sequence ID" value="NZ_HG938372.1"/>
</dbReference>
<dbReference type="PDB" id="6U08">
    <property type="method" value="X-ray"/>
    <property type="resolution" value="2.49 A"/>
    <property type="chains" value="A/C/E/G=1261-1427"/>
</dbReference>
<dbReference type="PDB" id="8E5D">
    <property type="method" value="X-ray"/>
    <property type="resolution" value="2.39 A"/>
    <property type="chains" value="A=1290-1422"/>
</dbReference>
<dbReference type="PDB" id="8E5E">
    <property type="method" value="X-ray"/>
    <property type="resolution" value="2.62 A"/>
    <property type="chains" value="A=1290-1422"/>
</dbReference>
<dbReference type="PDBsum" id="6U08"/>
<dbReference type="PDBsum" id="8E5D"/>
<dbReference type="PDBsum" id="8E5E"/>
<dbReference type="SMR" id="P0DUH5"/>
<dbReference type="KEGG" id="bceo:I35_7839"/>
<dbReference type="GO" id="GO:0016020">
    <property type="term" value="C:membrane"/>
    <property type="evidence" value="ECO:0007669"/>
    <property type="project" value="UniProtKB-SubCell"/>
</dbReference>
<dbReference type="GO" id="GO:0016787">
    <property type="term" value="F:hydrolase activity"/>
    <property type="evidence" value="ECO:0007669"/>
    <property type="project" value="UniProtKB-KW"/>
</dbReference>
<dbReference type="GO" id="GO:0046872">
    <property type="term" value="F:metal ion binding"/>
    <property type="evidence" value="ECO:0007669"/>
    <property type="project" value="UniProtKB-KW"/>
</dbReference>
<dbReference type="GO" id="GO:0090729">
    <property type="term" value="F:toxin activity"/>
    <property type="evidence" value="ECO:0007669"/>
    <property type="project" value="UniProtKB-KW"/>
</dbReference>
<dbReference type="CDD" id="cd14742">
    <property type="entry name" value="PAAR_RHS"/>
    <property type="match status" value="1"/>
</dbReference>
<dbReference type="Gene3D" id="2.60.200.60">
    <property type="match status" value="1"/>
</dbReference>
<dbReference type="Gene3D" id="3.90.930.1">
    <property type="match status" value="1"/>
</dbReference>
<dbReference type="Gene3D" id="2.180.10.10">
    <property type="entry name" value="RHS repeat-associated core"/>
    <property type="match status" value="2"/>
</dbReference>
<dbReference type="InterPro" id="IPR032724">
    <property type="entry name" value="DddA-like"/>
</dbReference>
<dbReference type="InterPro" id="IPR045351">
    <property type="entry name" value="DUF6531"/>
</dbReference>
<dbReference type="InterPro" id="IPR008727">
    <property type="entry name" value="PAAR_motif"/>
</dbReference>
<dbReference type="InterPro" id="IPR001826">
    <property type="entry name" value="RHS"/>
</dbReference>
<dbReference type="InterPro" id="IPR022385">
    <property type="entry name" value="Rhs_assc_core"/>
</dbReference>
<dbReference type="InterPro" id="IPR031325">
    <property type="entry name" value="RHS_repeat"/>
</dbReference>
<dbReference type="InterPro" id="IPR050708">
    <property type="entry name" value="T6SS_VgrG/RHS"/>
</dbReference>
<dbReference type="InterPro" id="IPR006530">
    <property type="entry name" value="YD"/>
</dbReference>
<dbReference type="NCBIfam" id="TIGR03696">
    <property type="entry name" value="Rhs_assc_core"/>
    <property type="match status" value="1"/>
</dbReference>
<dbReference type="NCBIfam" id="TIGR01643">
    <property type="entry name" value="YD_repeat_2x"/>
    <property type="match status" value="7"/>
</dbReference>
<dbReference type="PANTHER" id="PTHR32305">
    <property type="match status" value="1"/>
</dbReference>
<dbReference type="PANTHER" id="PTHR32305:SF15">
    <property type="entry name" value="PROTEIN RHSA-RELATED"/>
    <property type="match status" value="1"/>
</dbReference>
<dbReference type="Pfam" id="PF14428">
    <property type="entry name" value="DddA-like"/>
    <property type="match status" value="1"/>
</dbReference>
<dbReference type="Pfam" id="PF20148">
    <property type="entry name" value="DUF6531"/>
    <property type="match status" value="1"/>
</dbReference>
<dbReference type="Pfam" id="PF05488">
    <property type="entry name" value="PAAR_motif"/>
    <property type="match status" value="1"/>
</dbReference>
<dbReference type="Pfam" id="PF03527">
    <property type="entry name" value="RHS"/>
    <property type="match status" value="1"/>
</dbReference>
<dbReference type="Pfam" id="PF05593">
    <property type="entry name" value="RHS_repeat"/>
    <property type="match status" value="7"/>
</dbReference>
<gene>
    <name evidence="5" type="primary">dddA</name>
    <name type="ORF">I35_7839</name>
</gene>
<name>DDDA_BURC1</name>
<sequence>MYEAARVTDPIDHTSALAGFLVGAVLGIALIAAVAFATFTCGFGVALLAGMMAGIGAQALLSIGESIGKMFSSQSGNIITGSPDVYVNSLSAAYATLSGVACSKHNPIPLVAQGSTNIFINGRPAARKDDKITCGATIGDGSHDTFFHGGTQTYLPVDDEVPPWLRTATDWAFTLAGLVGGLGGLLKASGGLSRAVLPCAAKFIGGYVLGEAFGRYVAGPAINKAIGGLFGNPIDVTTGRKILLAESETDYVIPSPLPVAIKRFYSSGIDYAGTLGRGWVLPWEIRLHARDGRLWYTDAQGRESGFPMLRAGQAAFSEADQRYLTRTPDGRYILHDLGERYYDFGQYDPESGRIAWVRRVEDQAGQWYQFERDSRGRVTEILTCGGLRAVLDYETVFGRLGTVTLVHEDERRLAVTYGYDENGQLASVTDANGAVVRQFAYTNGLMTSHMNALGFTSSYVWSKIEGEPRVVETHTSEGENWTFEYDVAGRQTRVRHADGRTAHWRFDAQSQIVEYTDLDGAFYRIKYDAVGMPVMLMLPGDRTVMFEYDDAGRIIAETDPLGRTTRTRYDGNSLRPVEVVGPDGGAWRVEYDQQGRVVSNQDSLGRENRYEYPKALTALPSAHFDALGGRKTLEWNSLGKLVGYTDCSGKTTRTSFDAFGRICSRENALGQRITYDVRPTGEPRRVTYPDGSSETFEYDAAGTLVRYIGLGGRVQELLRNARGQLIEAVDPAGRRVQYRYDVEGRLRELQQDHARYTFTYSAGGRLLTETRPDGILRRFEYGEAGELLGLDIVGAPDPHATGNRSVRTIRFERDRMGVLKVQRTPTEVTRYQHDKGDRLVKVERVPTPSGIALGIVPDAVEFEYDKGGRLVAEHGSNGSVIYTLDELDNVVSLGLPHDQTLQMLRYGSGHVHQIRFGDQVVADFERDDLHREVSRTQGRLTQRSGYDPLGRKVWQSAGIDPEMLGRGSGQLWRNYGYDGAGDLIETSDSLRGSTRFSYDPAGRLISRANPLDRKFEEFAWDAAGNLLDDAQRKSRGYVEGNRLLMWQDLRFEYDPFGNLATKRRGANQTQRFTYDGQDRLITVHTQDVRGVVETRFAYDPLGRRIAKTDTAFDLRGMKLRAETKRFVWEGLRLVQEVRETGVSSYVYSPDAPYSPVARADTVMAEALAATVIDSAKRAARIFHFHTDPVGAPQEVTDEAGEVAWAGQYAAWGKVEATNRGVTAARTDQPLRFAGQYADDSTGLHYNTFRFYDPDVGRFINQDPIGLNGGANVYHYAPNPVGWVDPWGLAGSYALGPYQISAPQLPAYNGQTVGTFYYVNDAGGLESKVFSSGGPTPYPNYANAGHVEGQSALFMRDNGISEGLVFHNNPEGTCGFCVNMTETLLPENAKMTVVPPEGAIPVKRGATGETKVFTGNSNSPKSPTKGGC</sequence>
<keyword id="KW-0002">3D-structure</keyword>
<keyword id="KW-0378">Hydrolase</keyword>
<keyword id="KW-0472">Membrane</keyword>
<keyword id="KW-0479">Metal-binding</keyword>
<keyword id="KW-0677">Repeat</keyword>
<keyword id="KW-0800">Toxin</keyword>
<keyword id="KW-0812">Transmembrane</keyword>
<keyword id="KW-1133">Transmembrane helix</keyword>
<keyword id="KW-0862">Zinc</keyword>
<reference key="1">
    <citation type="journal article" date="2014" name="Genome Announc.">
        <title>Genome Sequence of Burkholderia cenocepacia H111, a Cystic Fibrosis Airway Isolate.</title>
        <authorList>
            <person name="Carlier A."/>
            <person name="Agnoli K."/>
            <person name="Pessi G."/>
            <person name="Suppiger A."/>
            <person name="Jenul C."/>
            <person name="Schmid N."/>
            <person name="Tuemmler B."/>
            <person name="Pinto-Carbo M."/>
            <person name="Eberl L."/>
        </authorList>
    </citation>
    <scope>NUCLEOTIDE SEQUENCE [LARGE SCALE GENOMIC DNA]</scope>
    <source>
        <strain>H111</strain>
    </source>
</reference>
<reference evidence="8" key="2">
    <citation type="journal article" date="2020" name="Nature">
        <title>A bacterial cytidine deaminase toxin enables CRISPR-free mitochondrial base editing.</title>
        <authorList>
            <person name="Mok B.Y."/>
            <person name="de Moraes M.H."/>
            <person name="Zeng J."/>
            <person name="Bosch D.E."/>
            <person name="Kotrys A.V."/>
            <person name="Raguram A."/>
            <person name="Hsu F."/>
            <person name="Radey M.C."/>
            <person name="Peterson S.B."/>
            <person name="Mootha V.K."/>
            <person name="Mougous J.D."/>
            <person name="Liu D.R."/>
        </authorList>
    </citation>
    <scope>X-RAY CRYSTALLOGRAPHY (2.49 ANGSTROMS) OF 1261-1427 IN COMPLEX WITH IMMUNITY PROTEIN</scope>
    <scope>FUNCTION AS A DS-DNA CYTIDINE DEAMINASE</scope>
    <scope>FUNCTION</scope>
    <scope>CATALYTIC ACTIVITY</scope>
    <scope>SUBSTRATE SPECIFICITY</scope>
    <scope>SUBUNIT</scope>
    <scope>DOMAIN</scope>
    <scope>DISRUPTION PHENOTYPE</scope>
    <scope>BIOTECHNOLOGY (MTDNA EDITING)</scope>
    <scope>MUTAGENESIS OF GLU-1347</scope>
    <source>
        <strain>H111</strain>
    </source>
</reference>
<reference key="3">
    <citation type="journal article" date="2021" name="Nat. Plants">
        <title>Targeted base editing in the plastid genome of Arabidopsis thaliana.</title>
        <authorList>
            <person name="Nakazato I."/>
            <person name="Okuno M."/>
            <person name="Yamamoto H."/>
            <person name="Tamura Y."/>
            <person name="Itoh T."/>
            <person name="Shikanai T."/>
            <person name="Takanashi H."/>
            <person name="Tsutsumi N."/>
            <person name="Arimura S.I."/>
        </authorList>
    </citation>
    <scope>BIOTECHNOLOGY (CPDNA EDITING)</scope>
</reference>
<reference key="4">
    <citation type="journal article" date="2023" name="Nat. Commun.">
        <title>Assessing and advancing the safety of CRISPR-Cas tools: from DNA to RNA editing.</title>
        <authorList>
            <person name="Tao J."/>
            <person name="Bauer D.E."/>
            <person name="Chiarle R."/>
        </authorList>
    </citation>
    <scope>REVIEW ON SAFETY OF GENOME EDITING TOOLS</scope>
</reference>
<proteinExistence type="evidence at protein level"/>
<comment type="function">
    <text evidence="3 7">Toxic component of a toxin-immunity protein module, which functions as a cellular contact-dependent growth inhibition (CDI) system. CDI modules allow bacteria to communicate with and inhibit the growth of closely related neighboring bacteria in a contact-dependent fashion. Bacteria that have this module inhibit or kill bacteria without it, giving them a growth advantage. Probably specifically inhibited by cognate immunity protein DddI (Probable). The C-terminal 163 residue fragment has double-stranded DNA cytidine deaminase activity; it does not deaminate ssDNA, ssRNA or dsRNA. Leads to C:G to T:A conversions in deaminated DNA. Preferentially deaminates 5'-TC-3' substrates (PubMed:32641830).</text>
</comment>
<comment type="catalytic activity">
    <reaction evidence="3">
        <text>a 2'-deoxycytidine in double-stranded DNA + H2O + H(+) = a 2'-deoxyuridine in double-stranded DNA + NH4(+)</text>
        <dbReference type="Rhea" id="RHEA:66604"/>
        <dbReference type="Rhea" id="RHEA-COMP:17070"/>
        <dbReference type="Rhea" id="RHEA-COMP:17071"/>
        <dbReference type="ChEBI" id="CHEBI:15377"/>
        <dbReference type="ChEBI" id="CHEBI:15378"/>
        <dbReference type="ChEBI" id="CHEBI:28938"/>
        <dbReference type="ChEBI" id="CHEBI:85452"/>
        <dbReference type="ChEBI" id="CHEBI:133902"/>
    </reaction>
</comment>
<comment type="subunit">
    <text evidence="3">The toxic domain forms a 1:1 complex with the DddI immunity protein.</text>
</comment>
<comment type="subcellular location">
    <subcellularLocation>
        <location evidence="1">Membrane</location>
        <topology evidence="1">Multi-pass membrane protein</topology>
    </subcellularLocation>
</comment>
<comment type="domain">
    <text evidence="3">The toxic domain is at the C-terminus (residues 1264-1427); expression of this domain in E.coli reduces viability nearly 1000-fold.</text>
</comment>
<comment type="disruption phenotype">
    <text evidence="3">A double dddA-dddI deletion has a 100-fold growth disadvantage compared to wild-type in competition experiments.</text>
</comment>
<comment type="biotechnology">
    <text evidence="3 4">The deaminase domain can be used to edit DNA. Is particularly useful for editing organellar DNA, as unlike CRISPR, it does not require guide RNA. Splitting the domain yields 2 halves that are not active until reassembled on target DNA by programmable DNA-binding proteins. Can be split at residue 1333 or 1397; each of the halves is then fused to a mitochondrial target signal, a TALE array specific for the targeted DNA, the half DddA toxin domain and a single UGI protein (uracil glycolase inhibitor), leading to editing without significant generation of insertions or deletions. Typical efficiencies on mitochondrial DNA (mtDNA) vary between 5 and 50% editing. It can be used in immortalized and non-immortalized cells, and in non-dividing cells as they continue to replicate mtDNA. A suspected tumor-related mutation in ND4 has been recreated using this system and shows the phenotypes expected for complex I disruption (PubMed:32641830). Has also been used to edit A.thaliana chloroplast (cp) DNA. The half deaminase domain is fused to a cp target signal, a TALE array specific for the targeted DNA, the half DddA toxin domain and a UGI protein in a T-DNA construct; plants were transformed by floral dipping. The process does not require tissue culture. Three cp genes were targeted (rrn16S, psbA, rpoC1). Homoplasmic substitutions were observed in many progeny and were stably inherited (PubMed:34211131).</text>
</comment>
<comment type="similarity">
    <text evidence="7">Belongs to the RHS/WapA nuclease family.</text>
</comment>
<comment type="sequence caution" evidence="7">
    <conflict type="erroneous initiation">
        <sequence resource="EMBL-CDS" id="CDN65395"/>
    </conflict>
    <text>Truncated N-terminus.</text>
</comment>
<feature type="chain" id="PRO_0000452477" description="Double-stranded DNA deaminase toxin A">
    <location>
        <begin position="1"/>
        <end position="1427"/>
    </location>
</feature>
<feature type="transmembrane region" description="Helical" evidence="1">
    <location>
        <begin position="16"/>
        <end position="36"/>
    </location>
</feature>
<feature type="transmembrane region" description="Helical" evidence="1">
    <location>
        <begin position="43"/>
        <end position="63"/>
    </location>
</feature>
<feature type="repeat" description="YD 1" evidence="1">
    <location>
        <begin position="469"/>
        <end position="501"/>
    </location>
</feature>
<feature type="repeat" description="YD 2" evidence="1">
    <location>
        <begin position="548"/>
        <end position="584"/>
    </location>
</feature>
<feature type="repeat" description="YD 3" evidence="1">
    <location>
        <begin position="720"/>
        <end position="747"/>
    </location>
</feature>
<feature type="repeat" description="YD 4" evidence="1">
    <location>
        <begin position="977"/>
        <end position="1008"/>
    </location>
</feature>
<feature type="region of interest" description="C-terminal effector domain, has cytidine deaminase activity" evidence="3">
    <location>
        <begin position="1264"/>
        <end position="1427"/>
    </location>
</feature>
<feature type="region of interest" description="Disordered" evidence="2">
    <location>
        <begin position="1402"/>
        <end position="1427"/>
    </location>
</feature>
<feature type="compositionally biased region" description="Polar residues" evidence="2">
    <location>
        <begin position="1412"/>
        <end position="1421"/>
    </location>
</feature>
<feature type="binding site" evidence="8">
    <location>
        <position position="1345"/>
    </location>
    <ligand>
        <name>Zn(2+)</name>
        <dbReference type="ChEBI" id="CHEBI:29105"/>
    </ligand>
</feature>
<feature type="binding site" evidence="8">
    <location>
        <position position="1373"/>
    </location>
    <ligand>
        <name>Zn(2+)</name>
        <dbReference type="ChEBI" id="CHEBI:29105"/>
    </ligand>
</feature>
<feature type="binding site" evidence="8">
    <location>
        <position position="1376"/>
    </location>
    <ligand>
        <name>Zn(2+)</name>
        <dbReference type="ChEBI" id="CHEBI:29105"/>
    </ligand>
</feature>
<feature type="mutagenesis site" description="Not toxic against wild-type strain in competition experiments, no deamination activity, no heterologous DNA editing activity." evidence="3">
    <original>E</original>
    <variation>A</variation>
    <location>
        <position position="1347"/>
    </location>
</feature>
<feature type="strand" evidence="9">
    <location>
        <begin position="1291"/>
        <end position="1294"/>
    </location>
</feature>
<feature type="strand" evidence="9">
    <location>
        <begin position="1297"/>
        <end position="1300"/>
    </location>
</feature>
<feature type="strand" evidence="9">
    <location>
        <begin position="1308"/>
        <end position="1310"/>
    </location>
</feature>
<feature type="strand" evidence="9">
    <location>
        <begin position="1312"/>
        <end position="1318"/>
    </location>
</feature>
<feature type="strand" evidence="10">
    <location>
        <begin position="1320"/>
        <end position="1322"/>
    </location>
</feature>
<feature type="strand" evidence="9">
    <location>
        <begin position="1324"/>
        <end position="1331"/>
    </location>
</feature>
<feature type="turn" evidence="9">
    <location>
        <begin position="1341"/>
        <end position="1344"/>
    </location>
</feature>
<feature type="helix" evidence="9">
    <location>
        <begin position="1346"/>
        <end position="1357"/>
    </location>
</feature>
<feature type="strand" evidence="9">
    <location>
        <begin position="1361"/>
        <end position="1366"/>
    </location>
</feature>
<feature type="helix" evidence="9">
    <location>
        <begin position="1374"/>
        <end position="1383"/>
    </location>
</feature>
<feature type="strand" evidence="9">
    <location>
        <begin position="1389"/>
        <end position="1393"/>
    </location>
</feature>
<feature type="strand" evidence="9">
    <location>
        <begin position="1406"/>
        <end position="1408"/>
    </location>
</feature>
<feature type="strand" evidence="9">
    <location>
        <begin position="1410"/>
        <end position="1413"/>
    </location>
</feature>